<comment type="function">
    <text evidence="6 8">Member of the two-component regulatory system PmrA/PmrB that plays a role in the regulation of resistance towards polymyxin B and cationic antimicrobial peptides in response to limiting concentrations of Mg(2+). Also autoregulates its own pmrAB operon under Mg(2+)-limiting conditions (PubMed:14507375). May function as a membrane-associated protein kinase that phosphorylates PmrA in response to environmental signals leading to activation of specific gene promoters (Probable).</text>
</comment>
<comment type="catalytic activity">
    <reaction evidence="1">
        <text>ATP + protein L-histidine = ADP + protein N-phospho-L-histidine.</text>
        <dbReference type="EC" id="2.7.13.3"/>
    </reaction>
</comment>
<comment type="subcellular location">
    <subcellularLocation>
        <location evidence="2">Membrane</location>
        <topology evidence="2">Multi-pass membrane protein</topology>
    </subcellularLocation>
</comment>
<comment type="induction">
    <text evidence="6">By cationic antimicrobial peptides and by Mg(2+)-limiting conditions.</text>
</comment>
<reference key="1">
    <citation type="journal article" date="2000" name="Nature">
        <title>Complete genome sequence of Pseudomonas aeruginosa PAO1, an opportunistic pathogen.</title>
        <authorList>
            <person name="Stover C.K."/>
            <person name="Pham X.-Q.T."/>
            <person name="Erwin A.L."/>
            <person name="Mizoguchi S.D."/>
            <person name="Warrener P."/>
            <person name="Hickey M.J."/>
            <person name="Brinkman F.S.L."/>
            <person name="Hufnagle W.O."/>
            <person name="Kowalik D.J."/>
            <person name="Lagrou M."/>
            <person name="Garber R.L."/>
            <person name="Goltry L."/>
            <person name="Tolentino E."/>
            <person name="Westbrock-Wadman S."/>
            <person name="Yuan Y."/>
            <person name="Brody L.L."/>
            <person name="Coulter S.N."/>
            <person name="Folger K.R."/>
            <person name="Kas A."/>
            <person name="Larbig K."/>
            <person name="Lim R.M."/>
            <person name="Smith K.A."/>
            <person name="Spencer D.H."/>
            <person name="Wong G.K.-S."/>
            <person name="Wu Z."/>
            <person name="Paulsen I.T."/>
            <person name="Reizer J."/>
            <person name="Saier M.H. Jr."/>
            <person name="Hancock R.E.W."/>
            <person name="Lory S."/>
            <person name="Olson M.V."/>
        </authorList>
    </citation>
    <scope>NUCLEOTIDE SEQUENCE [LARGE SCALE GENOMIC DNA]</scope>
    <source>
        <strain>ATCC 15692 / DSM 22644 / CIP 104116 / JCM 14847 / LMG 12228 / 1C / PRS 101 / PAO1</strain>
    </source>
</reference>
<reference key="2">
    <citation type="journal article" date="2003" name="Mol. Microbiol.">
        <title>Cationic antimicrobial peptides activate a two-component regulatory system, PmrA-PmrB, that regulates resistance to polymyxin B and cationic antimicrobial peptides in Pseudomonas aeruginosa.</title>
        <authorList>
            <person name="McPhee J.B."/>
            <person name="Lewenza S."/>
            <person name="Hancock R.E."/>
        </authorList>
    </citation>
    <scope>FUNCTION</scope>
    <scope>INDUCTION BY CATIONIC ANTIMICROBIAL PEPTIDES</scope>
</reference>
<protein>
    <recommendedName>
        <fullName evidence="7">Sensor protein kinase PmrB</fullName>
        <ecNumber evidence="1">2.7.13.3</ecNumber>
    </recommendedName>
</protein>
<proteinExistence type="evidence at transcript level"/>
<evidence type="ECO:0000250" key="1">
    <source>
        <dbReference type="UniProtKB" id="P40719"/>
    </source>
</evidence>
<evidence type="ECO:0000255" key="2"/>
<evidence type="ECO:0000255" key="3">
    <source>
        <dbReference type="PROSITE-ProRule" id="PRU00102"/>
    </source>
</evidence>
<evidence type="ECO:0000255" key="4">
    <source>
        <dbReference type="PROSITE-ProRule" id="PRU00107"/>
    </source>
</evidence>
<evidence type="ECO:0000256" key="5">
    <source>
        <dbReference type="SAM" id="MobiDB-lite"/>
    </source>
</evidence>
<evidence type="ECO:0000269" key="6">
    <source>
    </source>
</evidence>
<evidence type="ECO:0000303" key="7">
    <source>
    </source>
</evidence>
<evidence type="ECO:0000305" key="8">
    <source>
    </source>
</evidence>
<keyword id="KW-0067">ATP-binding</keyword>
<keyword id="KW-0418">Kinase</keyword>
<keyword id="KW-0472">Membrane</keyword>
<keyword id="KW-0547">Nucleotide-binding</keyword>
<keyword id="KW-0597">Phosphoprotein</keyword>
<keyword id="KW-1185">Reference proteome</keyword>
<keyword id="KW-0808">Transferase</keyword>
<keyword id="KW-0812">Transmembrane</keyword>
<keyword id="KW-1133">Transmembrane helix</keyword>
<keyword id="KW-0902">Two-component regulatory system</keyword>
<name>PMRB_PSEAE</name>
<organism>
    <name type="scientific">Pseudomonas aeruginosa (strain ATCC 15692 / DSM 22644 / CIP 104116 / JCM 14847 / LMG 12228 / 1C / PRS 101 / PAO1)</name>
    <dbReference type="NCBI Taxonomy" id="208964"/>
    <lineage>
        <taxon>Bacteria</taxon>
        <taxon>Pseudomonadati</taxon>
        <taxon>Pseudomonadota</taxon>
        <taxon>Gammaproteobacteria</taxon>
        <taxon>Pseudomonadales</taxon>
        <taxon>Pseudomonadaceae</taxon>
        <taxon>Pseudomonas</taxon>
    </lineage>
</organism>
<gene>
    <name type="primary">pmrB</name>
    <name type="ordered locus">PA4777</name>
</gene>
<dbReference type="EC" id="2.7.13.3" evidence="1"/>
<dbReference type="EMBL" id="AE004091">
    <property type="protein sequence ID" value="AAG08163.1"/>
    <property type="molecule type" value="Genomic_DNA"/>
</dbReference>
<dbReference type="PIR" id="G83048">
    <property type="entry name" value="G83048"/>
</dbReference>
<dbReference type="RefSeq" id="NP_253465.1">
    <property type="nucleotide sequence ID" value="NC_002516.2"/>
</dbReference>
<dbReference type="RefSeq" id="WP_003112923.1">
    <property type="nucleotide sequence ID" value="NZ_QZGE01000018.1"/>
</dbReference>
<dbReference type="SMR" id="Q9HV31"/>
<dbReference type="FunCoup" id="Q9HV31">
    <property type="interactions" value="299"/>
</dbReference>
<dbReference type="STRING" id="208964.PA4777"/>
<dbReference type="PaxDb" id="208964-PA4777"/>
<dbReference type="GeneID" id="881841"/>
<dbReference type="KEGG" id="pae:PA4777"/>
<dbReference type="PATRIC" id="fig|208964.12.peg.5004"/>
<dbReference type="PseudoCAP" id="PA4777"/>
<dbReference type="HOGENOM" id="CLU_000445_89_37_6"/>
<dbReference type="InParanoid" id="Q9HV31"/>
<dbReference type="OrthoDB" id="9809766at2"/>
<dbReference type="PhylomeDB" id="Q9HV31"/>
<dbReference type="BioCyc" id="PAER208964:G1FZ6-4890-MONOMER"/>
<dbReference type="Proteomes" id="UP000002438">
    <property type="component" value="Chromosome"/>
</dbReference>
<dbReference type="GO" id="GO:0005886">
    <property type="term" value="C:plasma membrane"/>
    <property type="evidence" value="ECO:0000318"/>
    <property type="project" value="GO_Central"/>
</dbReference>
<dbReference type="GO" id="GO:0005524">
    <property type="term" value="F:ATP binding"/>
    <property type="evidence" value="ECO:0007669"/>
    <property type="project" value="UniProtKB-KW"/>
</dbReference>
<dbReference type="GO" id="GO:0000155">
    <property type="term" value="F:phosphorelay sensor kinase activity"/>
    <property type="evidence" value="ECO:0007669"/>
    <property type="project" value="InterPro"/>
</dbReference>
<dbReference type="GO" id="GO:0000160">
    <property type="term" value="P:phosphorelay signal transduction system"/>
    <property type="evidence" value="ECO:0000314"/>
    <property type="project" value="PseudoCAP"/>
</dbReference>
<dbReference type="CDD" id="cd16940">
    <property type="entry name" value="HATPase_BasS-like"/>
    <property type="match status" value="1"/>
</dbReference>
<dbReference type="CDD" id="cd00082">
    <property type="entry name" value="HisKA"/>
    <property type="match status" value="1"/>
</dbReference>
<dbReference type="FunFam" id="1.10.287.130:FF:000035">
    <property type="entry name" value="Two-component sensor histidine kinase"/>
    <property type="match status" value="1"/>
</dbReference>
<dbReference type="Gene3D" id="1.10.287.130">
    <property type="match status" value="1"/>
</dbReference>
<dbReference type="Gene3D" id="3.30.565.10">
    <property type="entry name" value="Histidine kinase-like ATPase, C-terminal domain"/>
    <property type="match status" value="1"/>
</dbReference>
<dbReference type="InterPro" id="IPR003660">
    <property type="entry name" value="HAMP_dom"/>
</dbReference>
<dbReference type="InterPro" id="IPR036890">
    <property type="entry name" value="HATPase_C_sf"/>
</dbReference>
<dbReference type="InterPro" id="IPR005467">
    <property type="entry name" value="His_kinase_dom"/>
</dbReference>
<dbReference type="InterPro" id="IPR003661">
    <property type="entry name" value="HisK_dim/P_dom"/>
</dbReference>
<dbReference type="InterPro" id="IPR036097">
    <property type="entry name" value="HisK_dim/P_sf"/>
</dbReference>
<dbReference type="InterPro" id="IPR004358">
    <property type="entry name" value="Sig_transdc_His_kin-like_C"/>
</dbReference>
<dbReference type="InterPro" id="IPR050428">
    <property type="entry name" value="TCS_sensor_his_kinase"/>
</dbReference>
<dbReference type="PANTHER" id="PTHR45436">
    <property type="entry name" value="SENSOR HISTIDINE KINASE YKOH"/>
    <property type="match status" value="1"/>
</dbReference>
<dbReference type="PANTHER" id="PTHR45436:SF14">
    <property type="entry name" value="SENSOR PROTEIN QSEC"/>
    <property type="match status" value="1"/>
</dbReference>
<dbReference type="Pfam" id="PF02518">
    <property type="entry name" value="HATPase_c"/>
    <property type="match status" value="1"/>
</dbReference>
<dbReference type="Pfam" id="PF00512">
    <property type="entry name" value="HisKA"/>
    <property type="match status" value="1"/>
</dbReference>
<dbReference type="PRINTS" id="PR00344">
    <property type="entry name" value="BCTRLSENSOR"/>
</dbReference>
<dbReference type="SMART" id="SM00387">
    <property type="entry name" value="HATPase_c"/>
    <property type="match status" value="1"/>
</dbReference>
<dbReference type="SMART" id="SM00388">
    <property type="entry name" value="HisKA"/>
    <property type="match status" value="1"/>
</dbReference>
<dbReference type="SUPFAM" id="SSF55874">
    <property type="entry name" value="ATPase domain of HSP90 chaperone/DNA topoisomerase II/histidine kinase"/>
    <property type="match status" value="1"/>
</dbReference>
<dbReference type="SUPFAM" id="SSF47384">
    <property type="entry name" value="Homodimeric domain of signal transducing histidine kinase"/>
    <property type="match status" value="1"/>
</dbReference>
<dbReference type="PROSITE" id="PS50885">
    <property type="entry name" value="HAMP"/>
    <property type="match status" value="1"/>
</dbReference>
<dbReference type="PROSITE" id="PS50109">
    <property type="entry name" value="HIS_KIN"/>
    <property type="match status" value="1"/>
</dbReference>
<feature type="chain" id="PRO_0000449422" description="Sensor protein kinase PmrB">
    <location>
        <begin position="1"/>
        <end position="477"/>
    </location>
</feature>
<feature type="transmembrane region" description="Helical" evidence="2">
    <location>
        <begin position="13"/>
        <end position="33"/>
    </location>
</feature>
<feature type="transmembrane region" description="Helical" evidence="2">
    <location>
        <begin position="161"/>
        <end position="181"/>
    </location>
</feature>
<feature type="domain" description="HAMP" evidence="3">
    <location>
        <begin position="186"/>
        <end position="238"/>
    </location>
</feature>
<feature type="domain" description="Histidine kinase" evidence="4">
    <location>
        <begin position="246"/>
        <end position="459"/>
    </location>
</feature>
<feature type="region of interest" description="Disordered" evidence="5">
    <location>
        <begin position="455"/>
        <end position="477"/>
    </location>
</feature>
<feature type="modified residue" description="Phosphohistidine; by autocatalysis" evidence="4">
    <location>
        <position position="249"/>
    </location>
</feature>
<accession>Q9HV31</accession>
<sequence length="477" mass="52706">MSRAAVPSVRRRLLVNLLVGFVLCWLSVAALTYHLSLKQVNRLFDDDMVDFGEAALRLLDLATEDQAGEDGSITEIIERSREAIQGLPLLRRESALGYALWRDGQPLLSSLNLPPEITAQGPGFSTVEAQGTHWRVLQLNIDGFQIWISENLIYRQHTMNLLLFYSLFPLLLALPLLGGLVWFGVARGLAPLREVQAEVQQRSARHLQPIAVEAVPLEIRGLIDELNLLLERLRTALEAERRLTSDAAHEIRTPLASLRTHAQVALRSEDPKAHARGLLQVSRSVERISTLMEQILLLARLDGDALLEQFHPVNLATLAEDVLSELARQAIDKDIELSLHQETVYVMGIDLWLKAMVGNLVGNALRYTPAGGQVEIRVENRAQHAVLRVRDNGPGVALEEQQAIFTRFYRSPATSSGEGSGLGLPIVKRIVELHFGSIGLGKGLEGKGLEVQVFLPKTQPDATRPPARGPDSGRSHI</sequence>